<evidence type="ECO:0000250" key="1"/>
<evidence type="ECO:0000255" key="2">
    <source>
        <dbReference type="PROSITE-ProRule" id="PRU01058"/>
    </source>
</evidence>
<reference key="1">
    <citation type="journal article" date="1996" name="Nucleic Acids Res.">
        <title>Complete sequence analysis of the genome of the bacterium Mycoplasma pneumoniae.</title>
        <authorList>
            <person name="Himmelreich R."/>
            <person name="Hilbert H."/>
            <person name="Plagens H."/>
            <person name="Pirkl E."/>
            <person name="Li B.-C."/>
            <person name="Herrmann R."/>
        </authorList>
    </citation>
    <scope>NUCLEOTIDE SEQUENCE [LARGE SCALE GENOMIC DNA]</scope>
    <source>
        <strain>ATCC 29342 / M129 / Subtype 1</strain>
    </source>
</reference>
<name>RBGA_MYCPN</name>
<gene>
    <name type="primary">rbgA</name>
    <name type="ordered locus">MPN_656</name>
    <name type="ORF">K05_orf271</name>
    <name type="ORF">MP186</name>
</gene>
<protein>
    <recommendedName>
        <fullName>Probable ribosome biogenesis GTPase A</fullName>
    </recommendedName>
</protein>
<organism>
    <name type="scientific">Mycoplasma pneumoniae (strain ATCC 29342 / M129 / Subtype 1)</name>
    <name type="common">Mycoplasmoides pneumoniae</name>
    <dbReference type="NCBI Taxonomy" id="272634"/>
    <lineage>
        <taxon>Bacteria</taxon>
        <taxon>Bacillati</taxon>
        <taxon>Mycoplasmatota</taxon>
        <taxon>Mycoplasmoidales</taxon>
        <taxon>Mycoplasmoidaceae</taxon>
        <taxon>Mycoplasmoides</taxon>
    </lineage>
</organism>
<proteinExistence type="inferred from homology"/>
<comment type="function">
    <text evidence="1">Required for a late step of 50S ribosomal subunit assembly. Has GTPase activity. Binds to the 23S rRNA (By similarity).</text>
</comment>
<comment type="subcellular location">
    <subcellularLocation>
        <location evidence="1">Cytoplasm</location>
    </subcellularLocation>
</comment>
<comment type="similarity">
    <text evidence="2">Belongs to the TRAFAC class YlqF/YawG GTPase family. MTG1 subfamily.</text>
</comment>
<keyword id="KW-0963">Cytoplasm</keyword>
<keyword id="KW-0342">GTP-binding</keyword>
<keyword id="KW-0378">Hydrolase</keyword>
<keyword id="KW-0547">Nucleotide-binding</keyword>
<keyword id="KW-1185">Reference proteome</keyword>
<keyword id="KW-0690">Ribosome biogenesis</keyword>
<accession>P75135</accession>
<sequence>MDTFTSAVKINWFPGHMKKTHDQLKKLASSLDGVIEVVDARAPTLTQNPEITAYFTNKPKLTLALKADLAQTVANSNILWGTLKQGLQLKRLVIKKLQTLFQAKKNQLKAKGLLVHQFRLAVIGMPNVGKSSLINLLLNKNHLQVANRAGVTKSMSWNQISSEFYLSDTPGVFFKRIDEMAVGYKLVLTNVIKREVVPLEDVGAFAFCYLSKHYPQLLPYEGTDFTEFLHKFAISRKLLQKSNQLNINLACELFVSELINGKYGKLSFELD</sequence>
<feature type="chain" id="PRO_0000210615" description="Probable ribosome biogenesis GTPase A">
    <location>
        <begin position="1"/>
        <end position="271"/>
    </location>
</feature>
<feature type="domain" description="CP-type G" evidence="2">
    <location>
        <begin position="21"/>
        <end position="175"/>
    </location>
</feature>
<feature type="binding site" evidence="1">
    <location>
        <begin position="127"/>
        <end position="132"/>
    </location>
    <ligand>
        <name>GTP</name>
        <dbReference type="ChEBI" id="CHEBI:37565"/>
    </ligand>
</feature>
<feature type="binding site" evidence="1">
    <location>
        <position position="171"/>
    </location>
    <ligand>
        <name>GTP</name>
        <dbReference type="ChEBI" id="CHEBI:37565"/>
    </ligand>
</feature>
<dbReference type="EMBL" id="U00089">
    <property type="protein sequence ID" value="AAB95834.1"/>
    <property type="molecule type" value="Genomic_DNA"/>
</dbReference>
<dbReference type="PIR" id="S73512">
    <property type="entry name" value="S73512"/>
</dbReference>
<dbReference type="RefSeq" id="NP_110345.1">
    <property type="nucleotide sequence ID" value="NC_000912.1"/>
</dbReference>
<dbReference type="SMR" id="P75135"/>
<dbReference type="IntAct" id="P75135">
    <property type="interactions" value="10"/>
</dbReference>
<dbReference type="STRING" id="272634.MPN_656"/>
<dbReference type="EnsemblBacteria" id="AAB95834">
    <property type="protein sequence ID" value="AAB95834"/>
    <property type="gene ID" value="MPN_656"/>
</dbReference>
<dbReference type="KEGG" id="mpn:MPN_656"/>
<dbReference type="PATRIC" id="fig|272634.6.peg.721"/>
<dbReference type="HOGENOM" id="CLU_011106_1_0_14"/>
<dbReference type="OrthoDB" id="9779790at2"/>
<dbReference type="BioCyc" id="MPNE272634:G1GJ3-1048-MONOMER"/>
<dbReference type="Proteomes" id="UP000000808">
    <property type="component" value="Chromosome"/>
</dbReference>
<dbReference type="GO" id="GO:0005737">
    <property type="term" value="C:cytoplasm"/>
    <property type="evidence" value="ECO:0007669"/>
    <property type="project" value="UniProtKB-SubCell"/>
</dbReference>
<dbReference type="GO" id="GO:0005525">
    <property type="term" value="F:GTP binding"/>
    <property type="evidence" value="ECO:0007669"/>
    <property type="project" value="UniProtKB-KW"/>
</dbReference>
<dbReference type="GO" id="GO:0003924">
    <property type="term" value="F:GTPase activity"/>
    <property type="evidence" value="ECO:0007669"/>
    <property type="project" value="TreeGrafter"/>
</dbReference>
<dbReference type="GO" id="GO:0042254">
    <property type="term" value="P:ribosome biogenesis"/>
    <property type="evidence" value="ECO:0007669"/>
    <property type="project" value="UniProtKB-KW"/>
</dbReference>
<dbReference type="GO" id="GO:0006412">
    <property type="term" value="P:translation"/>
    <property type="evidence" value="ECO:0007669"/>
    <property type="project" value="TreeGrafter"/>
</dbReference>
<dbReference type="CDD" id="cd01856">
    <property type="entry name" value="YlqF"/>
    <property type="match status" value="1"/>
</dbReference>
<dbReference type="Gene3D" id="1.10.1580.10">
    <property type="match status" value="1"/>
</dbReference>
<dbReference type="Gene3D" id="3.40.50.300">
    <property type="entry name" value="P-loop containing nucleotide triphosphate hydrolases"/>
    <property type="match status" value="1"/>
</dbReference>
<dbReference type="InterPro" id="IPR030378">
    <property type="entry name" value="G_CP_dom"/>
</dbReference>
<dbReference type="InterPro" id="IPR006073">
    <property type="entry name" value="GTP-bd"/>
</dbReference>
<dbReference type="InterPro" id="IPR023179">
    <property type="entry name" value="GTP-bd_ortho_bundle_sf"/>
</dbReference>
<dbReference type="InterPro" id="IPR019991">
    <property type="entry name" value="GTP-bd_ribosome_bgen"/>
</dbReference>
<dbReference type="InterPro" id="IPR016478">
    <property type="entry name" value="GTPase_MTG1"/>
</dbReference>
<dbReference type="InterPro" id="IPR027417">
    <property type="entry name" value="P-loop_NTPase"/>
</dbReference>
<dbReference type="NCBIfam" id="TIGR03596">
    <property type="entry name" value="GTPase_YlqF"/>
    <property type="match status" value="1"/>
</dbReference>
<dbReference type="PANTHER" id="PTHR45782">
    <property type="entry name" value="MITOCHONDRIAL RIBOSOME-ASSOCIATED GTPASE 1"/>
    <property type="match status" value="1"/>
</dbReference>
<dbReference type="PANTHER" id="PTHR45782:SF4">
    <property type="entry name" value="MITOCHONDRIAL RIBOSOME-ASSOCIATED GTPASE 1"/>
    <property type="match status" value="1"/>
</dbReference>
<dbReference type="Pfam" id="PF01926">
    <property type="entry name" value="MMR_HSR1"/>
    <property type="match status" value="1"/>
</dbReference>
<dbReference type="PIRSF" id="PIRSF006230">
    <property type="entry name" value="MG442"/>
    <property type="match status" value="1"/>
</dbReference>
<dbReference type="SUPFAM" id="SSF52540">
    <property type="entry name" value="P-loop containing nucleoside triphosphate hydrolases"/>
    <property type="match status" value="1"/>
</dbReference>
<dbReference type="PROSITE" id="PS51721">
    <property type="entry name" value="G_CP"/>
    <property type="match status" value="1"/>
</dbReference>